<sequence length="152" mass="17454">MFRGATLVNLDSKGRLTVPTRYREQLIESATGQMVCTIDIHRPCLLLYPLPEWEIIEQKLSRLSSMNPVERRVQRLLLGHASECQMDGAGRLLIAPVLRQHAGLTKEVMLVGQFNKFELWDETTWYQQVKEDIDAEQSATETLSERLQDLSL</sequence>
<dbReference type="EMBL" id="CP000026">
    <property type="protein sequence ID" value="AAV76154.1"/>
    <property type="molecule type" value="Genomic_DNA"/>
</dbReference>
<dbReference type="RefSeq" id="WP_000488297.1">
    <property type="nucleotide sequence ID" value="NC_006511.1"/>
</dbReference>
<dbReference type="SMR" id="Q5PDH5"/>
<dbReference type="KEGG" id="spt:SPA0121"/>
<dbReference type="HOGENOM" id="CLU_107907_2_0_6"/>
<dbReference type="Proteomes" id="UP000008185">
    <property type="component" value="Chromosome"/>
</dbReference>
<dbReference type="GO" id="GO:0005737">
    <property type="term" value="C:cytoplasm"/>
    <property type="evidence" value="ECO:0007669"/>
    <property type="project" value="UniProtKB-UniRule"/>
</dbReference>
<dbReference type="GO" id="GO:0009295">
    <property type="term" value="C:nucleoid"/>
    <property type="evidence" value="ECO:0007669"/>
    <property type="project" value="UniProtKB-SubCell"/>
</dbReference>
<dbReference type="GO" id="GO:0003700">
    <property type="term" value="F:DNA-binding transcription factor activity"/>
    <property type="evidence" value="ECO:0007669"/>
    <property type="project" value="UniProtKB-UniRule"/>
</dbReference>
<dbReference type="GO" id="GO:0000976">
    <property type="term" value="F:transcription cis-regulatory region binding"/>
    <property type="evidence" value="ECO:0007669"/>
    <property type="project" value="TreeGrafter"/>
</dbReference>
<dbReference type="GO" id="GO:2000143">
    <property type="term" value="P:negative regulation of DNA-templated transcription initiation"/>
    <property type="evidence" value="ECO:0007669"/>
    <property type="project" value="TreeGrafter"/>
</dbReference>
<dbReference type="CDD" id="cd16321">
    <property type="entry name" value="MraZ_C"/>
    <property type="match status" value="1"/>
</dbReference>
<dbReference type="CDD" id="cd16320">
    <property type="entry name" value="MraZ_N"/>
    <property type="match status" value="1"/>
</dbReference>
<dbReference type="FunFam" id="3.40.1550.20:FF:000001">
    <property type="entry name" value="Transcriptional regulator MraZ"/>
    <property type="match status" value="1"/>
</dbReference>
<dbReference type="Gene3D" id="3.40.1550.20">
    <property type="entry name" value="Transcriptional regulator MraZ domain"/>
    <property type="match status" value="1"/>
</dbReference>
<dbReference type="HAMAP" id="MF_01008">
    <property type="entry name" value="MraZ"/>
    <property type="match status" value="1"/>
</dbReference>
<dbReference type="InterPro" id="IPR003444">
    <property type="entry name" value="MraZ"/>
</dbReference>
<dbReference type="InterPro" id="IPR035644">
    <property type="entry name" value="MraZ_C"/>
</dbReference>
<dbReference type="InterPro" id="IPR020603">
    <property type="entry name" value="MraZ_dom"/>
</dbReference>
<dbReference type="InterPro" id="IPR035642">
    <property type="entry name" value="MraZ_N"/>
</dbReference>
<dbReference type="InterPro" id="IPR038619">
    <property type="entry name" value="MraZ_sf"/>
</dbReference>
<dbReference type="InterPro" id="IPR007159">
    <property type="entry name" value="SpoVT-AbrB_dom"/>
</dbReference>
<dbReference type="InterPro" id="IPR037914">
    <property type="entry name" value="SpoVT-AbrB_sf"/>
</dbReference>
<dbReference type="NCBIfam" id="TIGR00242">
    <property type="entry name" value="division/cell wall cluster transcriptional repressor MraZ"/>
    <property type="match status" value="1"/>
</dbReference>
<dbReference type="PANTHER" id="PTHR34701">
    <property type="entry name" value="TRANSCRIPTIONAL REGULATOR MRAZ"/>
    <property type="match status" value="1"/>
</dbReference>
<dbReference type="PANTHER" id="PTHR34701:SF1">
    <property type="entry name" value="TRANSCRIPTIONAL REGULATOR MRAZ"/>
    <property type="match status" value="1"/>
</dbReference>
<dbReference type="Pfam" id="PF02381">
    <property type="entry name" value="MraZ"/>
    <property type="match status" value="2"/>
</dbReference>
<dbReference type="SUPFAM" id="SSF89447">
    <property type="entry name" value="AbrB/MazE/MraZ-like"/>
    <property type="match status" value="1"/>
</dbReference>
<dbReference type="PROSITE" id="PS51740">
    <property type="entry name" value="SPOVT_ABRB"/>
    <property type="match status" value="2"/>
</dbReference>
<keyword id="KW-0963">Cytoplasm</keyword>
<keyword id="KW-0238">DNA-binding</keyword>
<keyword id="KW-0677">Repeat</keyword>
<keyword id="KW-0678">Repressor</keyword>
<keyword id="KW-0804">Transcription</keyword>
<keyword id="KW-0805">Transcription regulation</keyword>
<comment type="function">
    <text evidence="1">Negatively regulates its own expression and that of the subsequent genes in the proximal part of the division and cell wall (dcw) gene cluster. Acts by binding directly to DNA. May also regulate the expression of genes outside the dcw cluster.</text>
</comment>
<comment type="subunit">
    <text evidence="1">Forms oligomers.</text>
</comment>
<comment type="subcellular location">
    <subcellularLocation>
        <location evidence="1">Cytoplasm</location>
        <location evidence="1">Nucleoid</location>
    </subcellularLocation>
</comment>
<comment type="similarity">
    <text evidence="1">Belongs to the MraZ family.</text>
</comment>
<reference key="1">
    <citation type="journal article" date="2004" name="Nat. Genet.">
        <title>Comparison of genome degradation in Paratyphi A and Typhi, human-restricted serovars of Salmonella enterica that cause typhoid.</title>
        <authorList>
            <person name="McClelland M."/>
            <person name="Sanderson K.E."/>
            <person name="Clifton S.W."/>
            <person name="Latreille P."/>
            <person name="Porwollik S."/>
            <person name="Sabo A."/>
            <person name="Meyer R."/>
            <person name="Bieri T."/>
            <person name="Ozersky P."/>
            <person name="McLellan M."/>
            <person name="Harkins C.R."/>
            <person name="Wang C."/>
            <person name="Nguyen C."/>
            <person name="Berghoff A."/>
            <person name="Elliott G."/>
            <person name="Kohlberg S."/>
            <person name="Strong C."/>
            <person name="Du F."/>
            <person name="Carter J."/>
            <person name="Kremizki C."/>
            <person name="Layman D."/>
            <person name="Leonard S."/>
            <person name="Sun H."/>
            <person name="Fulton L."/>
            <person name="Nash W."/>
            <person name="Miner T."/>
            <person name="Minx P."/>
            <person name="Delehaunty K."/>
            <person name="Fronick C."/>
            <person name="Magrini V."/>
            <person name="Nhan M."/>
            <person name="Warren W."/>
            <person name="Florea L."/>
            <person name="Spieth J."/>
            <person name="Wilson R.K."/>
        </authorList>
    </citation>
    <scope>NUCLEOTIDE SEQUENCE [LARGE SCALE GENOMIC DNA]</scope>
    <source>
        <strain>ATCC 9150 / SARB42</strain>
    </source>
</reference>
<name>MRAZ_SALPA</name>
<feature type="chain" id="PRO_0000108530" description="Transcriptional regulator MraZ">
    <location>
        <begin position="1"/>
        <end position="152"/>
    </location>
</feature>
<feature type="domain" description="SpoVT-AbrB 1" evidence="2">
    <location>
        <begin position="5"/>
        <end position="52"/>
    </location>
</feature>
<feature type="domain" description="SpoVT-AbrB 2" evidence="2">
    <location>
        <begin position="81"/>
        <end position="124"/>
    </location>
</feature>
<gene>
    <name evidence="1" type="primary">mraZ</name>
    <name type="ordered locus">SPA0121</name>
</gene>
<accession>Q5PDH5</accession>
<organism>
    <name type="scientific">Salmonella paratyphi A (strain ATCC 9150 / SARB42)</name>
    <dbReference type="NCBI Taxonomy" id="295319"/>
    <lineage>
        <taxon>Bacteria</taxon>
        <taxon>Pseudomonadati</taxon>
        <taxon>Pseudomonadota</taxon>
        <taxon>Gammaproteobacteria</taxon>
        <taxon>Enterobacterales</taxon>
        <taxon>Enterobacteriaceae</taxon>
        <taxon>Salmonella</taxon>
    </lineage>
</organism>
<protein>
    <recommendedName>
        <fullName>Transcriptional regulator MraZ</fullName>
    </recommendedName>
</protein>
<evidence type="ECO:0000255" key="1">
    <source>
        <dbReference type="HAMAP-Rule" id="MF_01008"/>
    </source>
</evidence>
<evidence type="ECO:0000255" key="2">
    <source>
        <dbReference type="PROSITE-ProRule" id="PRU01076"/>
    </source>
</evidence>
<proteinExistence type="inferred from homology"/>